<reference key="1">
    <citation type="journal article" date="2008" name="Genomics">
        <title>Characterization of ST-4821 complex, a unique Neisseria meningitidis clone.</title>
        <authorList>
            <person name="Peng J."/>
            <person name="Yang L."/>
            <person name="Yang F."/>
            <person name="Yang J."/>
            <person name="Yan Y."/>
            <person name="Nie H."/>
            <person name="Zhang X."/>
            <person name="Xiong Z."/>
            <person name="Jiang Y."/>
            <person name="Cheng F."/>
            <person name="Xu X."/>
            <person name="Chen S."/>
            <person name="Sun L."/>
            <person name="Li W."/>
            <person name="Shen Y."/>
            <person name="Shao Z."/>
            <person name="Liang X."/>
            <person name="Xu J."/>
            <person name="Jin Q."/>
        </authorList>
    </citation>
    <scope>NUCLEOTIDE SEQUENCE [LARGE SCALE GENOMIC DNA]</scope>
    <source>
        <strain>053442</strain>
    </source>
</reference>
<accession>A9M3L2</accession>
<dbReference type="EC" id="4.1.1.37" evidence="1"/>
<dbReference type="EMBL" id="CP000381">
    <property type="protein sequence ID" value="ABX72937.1"/>
    <property type="molecule type" value="Genomic_DNA"/>
</dbReference>
<dbReference type="RefSeq" id="WP_002236851.1">
    <property type="nucleotide sequence ID" value="NC_010120.1"/>
</dbReference>
<dbReference type="SMR" id="A9M3L2"/>
<dbReference type="KEGG" id="nmn:NMCC_0744"/>
<dbReference type="HOGENOM" id="CLU_040933_0_0_4"/>
<dbReference type="UniPathway" id="UPA00251">
    <property type="reaction ID" value="UER00321"/>
</dbReference>
<dbReference type="Proteomes" id="UP000001177">
    <property type="component" value="Chromosome"/>
</dbReference>
<dbReference type="GO" id="GO:0005829">
    <property type="term" value="C:cytosol"/>
    <property type="evidence" value="ECO:0007669"/>
    <property type="project" value="TreeGrafter"/>
</dbReference>
<dbReference type="GO" id="GO:0004853">
    <property type="term" value="F:uroporphyrinogen decarboxylase activity"/>
    <property type="evidence" value="ECO:0007669"/>
    <property type="project" value="UniProtKB-UniRule"/>
</dbReference>
<dbReference type="GO" id="GO:0019353">
    <property type="term" value="P:protoporphyrinogen IX biosynthetic process from glutamate"/>
    <property type="evidence" value="ECO:0007669"/>
    <property type="project" value="TreeGrafter"/>
</dbReference>
<dbReference type="CDD" id="cd00717">
    <property type="entry name" value="URO-D"/>
    <property type="match status" value="1"/>
</dbReference>
<dbReference type="FunFam" id="3.20.20.210:FF:000001">
    <property type="entry name" value="Uroporphyrinogen decarboxylase"/>
    <property type="match status" value="1"/>
</dbReference>
<dbReference type="Gene3D" id="3.20.20.210">
    <property type="match status" value="1"/>
</dbReference>
<dbReference type="HAMAP" id="MF_00218">
    <property type="entry name" value="URO_D"/>
    <property type="match status" value="1"/>
</dbReference>
<dbReference type="InterPro" id="IPR038071">
    <property type="entry name" value="UROD/MetE-like_sf"/>
</dbReference>
<dbReference type="InterPro" id="IPR006361">
    <property type="entry name" value="Uroporphyrinogen_deCO2ase_HemE"/>
</dbReference>
<dbReference type="InterPro" id="IPR000257">
    <property type="entry name" value="Uroporphyrinogen_deCOase"/>
</dbReference>
<dbReference type="NCBIfam" id="TIGR01464">
    <property type="entry name" value="hemE"/>
    <property type="match status" value="1"/>
</dbReference>
<dbReference type="PANTHER" id="PTHR21091">
    <property type="entry name" value="METHYLTETRAHYDROFOLATE:HOMOCYSTEINE METHYLTRANSFERASE RELATED"/>
    <property type="match status" value="1"/>
</dbReference>
<dbReference type="PANTHER" id="PTHR21091:SF169">
    <property type="entry name" value="UROPORPHYRINOGEN DECARBOXYLASE"/>
    <property type="match status" value="1"/>
</dbReference>
<dbReference type="Pfam" id="PF01208">
    <property type="entry name" value="URO-D"/>
    <property type="match status" value="1"/>
</dbReference>
<dbReference type="SUPFAM" id="SSF51726">
    <property type="entry name" value="UROD/MetE-like"/>
    <property type="match status" value="1"/>
</dbReference>
<dbReference type="PROSITE" id="PS00906">
    <property type="entry name" value="UROD_1"/>
    <property type="match status" value="1"/>
</dbReference>
<dbReference type="PROSITE" id="PS00907">
    <property type="entry name" value="UROD_2"/>
    <property type="match status" value="1"/>
</dbReference>
<protein>
    <recommendedName>
        <fullName evidence="1">Uroporphyrinogen decarboxylase</fullName>
        <shortName evidence="1">UPD</shortName>
        <shortName evidence="1">URO-D</shortName>
        <ecNumber evidence="1">4.1.1.37</ecNumber>
    </recommendedName>
</protein>
<comment type="function">
    <text evidence="1">Catalyzes the decarboxylation of four acetate groups of uroporphyrinogen-III to yield coproporphyrinogen-III.</text>
</comment>
<comment type="catalytic activity">
    <reaction evidence="1">
        <text>uroporphyrinogen III + 4 H(+) = coproporphyrinogen III + 4 CO2</text>
        <dbReference type="Rhea" id="RHEA:19865"/>
        <dbReference type="ChEBI" id="CHEBI:15378"/>
        <dbReference type="ChEBI" id="CHEBI:16526"/>
        <dbReference type="ChEBI" id="CHEBI:57308"/>
        <dbReference type="ChEBI" id="CHEBI:57309"/>
        <dbReference type="EC" id="4.1.1.37"/>
    </reaction>
</comment>
<comment type="pathway">
    <text evidence="1">Porphyrin-containing compound metabolism; protoporphyrin-IX biosynthesis; coproporphyrinogen-III from 5-aminolevulinate: step 4/4.</text>
</comment>
<comment type="subunit">
    <text evidence="1">Homodimer.</text>
</comment>
<comment type="subcellular location">
    <subcellularLocation>
        <location evidence="1">Cytoplasm</location>
    </subcellularLocation>
</comment>
<comment type="similarity">
    <text evidence="1">Belongs to the uroporphyrinogen decarboxylase family.</text>
</comment>
<keyword id="KW-0963">Cytoplasm</keyword>
<keyword id="KW-0210">Decarboxylase</keyword>
<keyword id="KW-0456">Lyase</keyword>
<keyword id="KW-0627">Porphyrin biosynthesis</keyword>
<organism>
    <name type="scientific">Neisseria meningitidis serogroup C (strain 053442)</name>
    <dbReference type="NCBI Taxonomy" id="374833"/>
    <lineage>
        <taxon>Bacteria</taxon>
        <taxon>Pseudomonadati</taxon>
        <taxon>Pseudomonadota</taxon>
        <taxon>Betaproteobacteria</taxon>
        <taxon>Neisseriales</taxon>
        <taxon>Neisseriaceae</taxon>
        <taxon>Neisseria</taxon>
    </lineage>
</organism>
<sequence length="354" mass="39194">MTLLKNDTFLRALLKQPVEYTPIWMMRQAGRYLPEYKATRAKAGSFLDLCKNTELATEVTIQPLERFDLDAAILFSDILTVPDAMGLGLYFAEGEGPKFKRALQHEDDIAKLHVPDMEKLQYVFDAVTSIRKALDGRVPLIGFSGSPFTLACYMVEGGSSKEFRTIKTMMYSRPDLLHKILDTNAQAVTAYLNAQIDAGAQAVQIFDTWGGVLSDAAFKEFSLKYIRQIVAGLKRESEGRRVPVIVFAKGGGLWLESMAEIGADALGLDWTCNIGEARRRVGKQVALQGNFDPFALFGTPESIRTEVARILADYGHGSGHVFNLGHGINQHADPEHAKILVDTVHELSRQYHGG</sequence>
<evidence type="ECO:0000255" key="1">
    <source>
        <dbReference type="HAMAP-Rule" id="MF_00218"/>
    </source>
</evidence>
<proteinExistence type="inferred from homology"/>
<name>DCUP_NEIM0</name>
<gene>
    <name evidence="1" type="primary">hemE</name>
    <name type="ordered locus">NMCC_0744</name>
</gene>
<feature type="chain" id="PRO_1000078079" description="Uroporphyrinogen decarboxylase">
    <location>
        <begin position="1"/>
        <end position="354"/>
    </location>
</feature>
<feature type="binding site" evidence="1">
    <location>
        <begin position="27"/>
        <end position="31"/>
    </location>
    <ligand>
        <name>substrate</name>
    </ligand>
</feature>
<feature type="binding site" evidence="1">
    <location>
        <position position="77"/>
    </location>
    <ligand>
        <name>substrate</name>
    </ligand>
</feature>
<feature type="binding site" evidence="1">
    <location>
        <position position="153"/>
    </location>
    <ligand>
        <name>substrate</name>
    </ligand>
</feature>
<feature type="binding site" evidence="1">
    <location>
        <position position="208"/>
    </location>
    <ligand>
        <name>substrate</name>
    </ligand>
</feature>
<feature type="binding site" evidence="1">
    <location>
        <position position="326"/>
    </location>
    <ligand>
        <name>substrate</name>
    </ligand>
</feature>
<feature type="site" description="Transition state stabilizer" evidence="1">
    <location>
        <position position="77"/>
    </location>
</feature>